<name>HOA_RHIR8</name>
<organism>
    <name type="scientific">Rhizobium rhizogenes (strain K84 / ATCC BAA-868)</name>
    <name type="common">Agrobacterium radiobacter</name>
    <dbReference type="NCBI Taxonomy" id="311403"/>
    <lineage>
        <taxon>Bacteria</taxon>
        <taxon>Pseudomonadati</taxon>
        <taxon>Pseudomonadota</taxon>
        <taxon>Alphaproteobacteria</taxon>
        <taxon>Hyphomicrobiales</taxon>
        <taxon>Rhizobiaceae</taxon>
        <taxon>Rhizobium/Agrobacterium group</taxon>
        <taxon>Rhizobium</taxon>
    </lineage>
</organism>
<keyword id="KW-0058">Aromatic hydrocarbons catabolism</keyword>
<keyword id="KW-0456">Lyase</keyword>
<keyword id="KW-0464">Manganese</keyword>
<keyword id="KW-0479">Metal-binding</keyword>
<protein>
    <recommendedName>
        <fullName evidence="1">4-hydroxy-2-oxovalerate aldolase</fullName>
        <shortName evidence="1">HOA</shortName>
        <ecNumber evidence="1">4.1.3.39</ecNumber>
    </recommendedName>
    <alternativeName>
        <fullName evidence="1">4-hydroxy-2-keto-pentanoic acid aldolase</fullName>
    </alternativeName>
    <alternativeName>
        <fullName evidence="1">4-hydroxy-2-oxopentanoate aldolase</fullName>
    </alternativeName>
</protein>
<feature type="chain" id="PRO_0000387778" description="4-hydroxy-2-oxovalerate aldolase">
    <location>
        <begin position="1"/>
        <end position="338"/>
    </location>
</feature>
<feature type="domain" description="Pyruvate carboxyltransferase" evidence="1">
    <location>
        <begin position="4"/>
        <end position="256"/>
    </location>
</feature>
<feature type="active site" description="Proton acceptor" evidence="1">
    <location>
        <position position="16"/>
    </location>
</feature>
<feature type="binding site" evidence="1">
    <location>
        <begin position="12"/>
        <end position="13"/>
    </location>
    <ligand>
        <name>substrate</name>
    </ligand>
</feature>
<feature type="binding site" evidence="1">
    <location>
        <position position="13"/>
    </location>
    <ligand>
        <name>Mn(2+)</name>
        <dbReference type="ChEBI" id="CHEBI:29035"/>
    </ligand>
</feature>
<feature type="binding site" evidence="1">
    <location>
        <position position="166"/>
    </location>
    <ligand>
        <name>substrate</name>
    </ligand>
</feature>
<feature type="binding site" evidence="1">
    <location>
        <position position="195"/>
    </location>
    <ligand>
        <name>Mn(2+)</name>
        <dbReference type="ChEBI" id="CHEBI:29035"/>
    </ligand>
</feature>
<feature type="binding site" evidence="1">
    <location>
        <position position="195"/>
    </location>
    <ligand>
        <name>substrate</name>
    </ligand>
</feature>
<feature type="binding site" evidence="1">
    <location>
        <position position="197"/>
    </location>
    <ligand>
        <name>Mn(2+)</name>
        <dbReference type="ChEBI" id="CHEBI:29035"/>
    </ligand>
</feature>
<feature type="binding site" evidence="1">
    <location>
        <position position="286"/>
    </location>
    <ligand>
        <name>substrate</name>
    </ligand>
</feature>
<feature type="site" description="Transition state stabilizer" evidence="1">
    <location>
        <position position="12"/>
    </location>
</feature>
<accession>B9JML6</accession>
<sequence>MPSIYVQDVTLRDGMHAIRHQYGLDAITSIARALDRAKVAAIEIGHGDGLSGSSFNYGIGRHQDVEWIAAVADVLEHAKCTTLLLPGIGTVHDLKAAAALGVASVRVATHCTEADVAKQHIEAARALDLDVAGFLMMAHMNSPEGLAKQAQMMEAYGAHCVYVTDSAGALTMDGVRERVRALRQALKPETQVGIHVHHNLSLGVANAVVGVEEGAYRVDASLAGMGAGAGNTPIEVFAAVADRLGWQHGCNLFALMDAADDLVRPLQDRPVRVDRETLSIGYAGVYSSFLRHAENASKTYGVDVRDILVELGRRRMVGGQEDMIVDVALDLLASQQRA</sequence>
<proteinExistence type="inferred from homology"/>
<comment type="catalytic activity">
    <reaction evidence="1">
        <text>(S)-4-hydroxy-2-oxopentanoate = acetaldehyde + pyruvate</text>
        <dbReference type="Rhea" id="RHEA:22624"/>
        <dbReference type="ChEBI" id="CHEBI:15343"/>
        <dbReference type="ChEBI" id="CHEBI:15361"/>
        <dbReference type="ChEBI" id="CHEBI:73143"/>
        <dbReference type="EC" id="4.1.3.39"/>
    </reaction>
</comment>
<comment type="similarity">
    <text evidence="1">Belongs to the 4-hydroxy-2-oxovalerate aldolase family.</text>
</comment>
<dbReference type="EC" id="4.1.3.39" evidence="1"/>
<dbReference type="EMBL" id="CP000629">
    <property type="protein sequence ID" value="ACM28797.1"/>
    <property type="molecule type" value="Genomic_DNA"/>
</dbReference>
<dbReference type="SMR" id="B9JML6"/>
<dbReference type="STRING" id="311403.Arad_7255"/>
<dbReference type="KEGG" id="ara:Arad_7255"/>
<dbReference type="eggNOG" id="COG0119">
    <property type="taxonomic scope" value="Bacteria"/>
</dbReference>
<dbReference type="HOGENOM" id="CLU_049173_0_0_5"/>
<dbReference type="Proteomes" id="UP000001600">
    <property type="component" value="Chromosome 2"/>
</dbReference>
<dbReference type="GO" id="GO:0003852">
    <property type="term" value="F:2-isopropylmalate synthase activity"/>
    <property type="evidence" value="ECO:0007669"/>
    <property type="project" value="TreeGrafter"/>
</dbReference>
<dbReference type="GO" id="GO:0008701">
    <property type="term" value="F:4-hydroxy-2-oxovalerate aldolase activity"/>
    <property type="evidence" value="ECO:0007669"/>
    <property type="project" value="UniProtKB-UniRule"/>
</dbReference>
<dbReference type="GO" id="GO:0030145">
    <property type="term" value="F:manganese ion binding"/>
    <property type="evidence" value="ECO:0007669"/>
    <property type="project" value="UniProtKB-UniRule"/>
</dbReference>
<dbReference type="GO" id="GO:0009056">
    <property type="term" value="P:catabolic process"/>
    <property type="evidence" value="ECO:0007669"/>
    <property type="project" value="UniProtKB-KW"/>
</dbReference>
<dbReference type="GO" id="GO:0009098">
    <property type="term" value="P:L-leucine biosynthetic process"/>
    <property type="evidence" value="ECO:0007669"/>
    <property type="project" value="TreeGrafter"/>
</dbReference>
<dbReference type="CDD" id="cd07943">
    <property type="entry name" value="DRE_TIM_HOA"/>
    <property type="match status" value="1"/>
</dbReference>
<dbReference type="Gene3D" id="1.10.8.60">
    <property type="match status" value="1"/>
</dbReference>
<dbReference type="Gene3D" id="3.20.20.70">
    <property type="entry name" value="Aldolase class I"/>
    <property type="match status" value="1"/>
</dbReference>
<dbReference type="HAMAP" id="MF_01656">
    <property type="entry name" value="HOA"/>
    <property type="match status" value="1"/>
</dbReference>
<dbReference type="InterPro" id="IPR050073">
    <property type="entry name" value="2-IPM_HCS-like"/>
</dbReference>
<dbReference type="InterPro" id="IPR017629">
    <property type="entry name" value="4OH_2_O-val_aldolase"/>
</dbReference>
<dbReference type="InterPro" id="IPR013785">
    <property type="entry name" value="Aldolase_TIM"/>
</dbReference>
<dbReference type="InterPro" id="IPR012425">
    <property type="entry name" value="DmpG_comm"/>
</dbReference>
<dbReference type="InterPro" id="IPR035685">
    <property type="entry name" value="DRE_TIM_HOA"/>
</dbReference>
<dbReference type="InterPro" id="IPR000891">
    <property type="entry name" value="PYR_CT"/>
</dbReference>
<dbReference type="NCBIfam" id="TIGR03217">
    <property type="entry name" value="4OH_2_O_val_ald"/>
    <property type="match status" value="1"/>
</dbReference>
<dbReference type="NCBIfam" id="NF006049">
    <property type="entry name" value="PRK08195.1"/>
    <property type="match status" value="1"/>
</dbReference>
<dbReference type="PANTHER" id="PTHR10277:SF9">
    <property type="entry name" value="2-ISOPROPYLMALATE SYNTHASE 1, CHLOROPLASTIC-RELATED"/>
    <property type="match status" value="1"/>
</dbReference>
<dbReference type="PANTHER" id="PTHR10277">
    <property type="entry name" value="HOMOCITRATE SYNTHASE-RELATED"/>
    <property type="match status" value="1"/>
</dbReference>
<dbReference type="Pfam" id="PF07836">
    <property type="entry name" value="DmpG_comm"/>
    <property type="match status" value="1"/>
</dbReference>
<dbReference type="Pfam" id="PF00682">
    <property type="entry name" value="HMGL-like"/>
    <property type="match status" value="1"/>
</dbReference>
<dbReference type="SUPFAM" id="SSF51569">
    <property type="entry name" value="Aldolase"/>
    <property type="match status" value="1"/>
</dbReference>
<dbReference type="SUPFAM" id="SSF89000">
    <property type="entry name" value="post-HMGL domain-like"/>
    <property type="match status" value="1"/>
</dbReference>
<dbReference type="PROSITE" id="PS50991">
    <property type="entry name" value="PYR_CT"/>
    <property type="match status" value="1"/>
</dbReference>
<gene>
    <name type="ordered locus">Arad_7255</name>
</gene>
<evidence type="ECO:0000255" key="1">
    <source>
        <dbReference type="HAMAP-Rule" id="MF_01656"/>
    </source>
</evidence>
<reference key="1">
    <citation type="journal article" date="2009" name="J. Bacteriol.">
        <title>Genome sequences of three Agrobacterium biovars help elucidate the evolution of multichromosome genomes in bacteria.</title>
        <authorList>
            <person name="Slater S.C."/>
            <person name="Goldman B.S."/>
            <person name="Goodner B."/>
            <person name="Setubal J.C."/>
            <person name="Farrand S.K."/>
            <person name="Nester E.W."/>
            <person name="Burr T.J."/>
            <person name="Banta L."/>
            <person name="Dickerman A.W."/>
            <person name="Paulsen I."/>
            <person name="Otten L."/>
            <person name="Suen G."/>
            <person name="Welch R."/>
            <person name="Almeida N.F."/>
            <person name="Arnold F."/>
            <person name="Burton O.T."/>
            <person name="Du Z."/>
            <person name="Ewing A."/>
            <person name="Godsy E."/>
            <person name="Heisel S."/>
            <person name="Houmiel K.L."/>
            <person name="Jhaveri J."/>
            <person name="Lu J."/>
            <person name="Miller N.M."/>
            <person name="Norton S."/>
            <person name="Chen Q."/>
            <person name="Phoolcharoen W."/>
            <person name="Ohlin V."/>
            <person name="Ondrusek D."/>
            <person name="Pride N."/>
            <person name="Stricklin S.L."/>
            <person name="Sun J."/>
            <person name="Wheeler C."/>
            <person name="Wilson L."/>
            <person name="Zhu H."/>
            <person name="Wood D.W."/>
        </authorList>
    </citation>
    <scope>NUCLEOTIDE SEQUENCE [LARGE SCALE GENOMIC DNA]</scope>
    <source>
        <strain>K84 / ATCC BAA-868</strain>
    </source>
</reference>